<reference key="1">
    <citation type="journal article" date="2015" name="BMC Genomics">
        <title>Combined metabolome and transcriptome profiling provides new insights into diterpene biosynthesis in S. pomifera glandular trichomes.</title>
        <authorList>
            <person name="Trikka F.A."/>
            <person name="Nikolaidis A."/>
            <person name="Ignea C."/>
            <person name="Tsaballa A."/>
            <person name="Tziveleka L.A."/>
            <person name="Ioannou E."/>
            <person name="Roussis V."/>
            <person name="Stea E.A."/>
            <person name="Bozic D."/>
            <person name="Argiriou A."/>
            <person name="Kanellis A.K."/>
            <person name="Kampranis S.C."/>
            <person name="Makris A.M."/>
        </authorList>
    </citation>
    <scope>NUCLEOTIDE SEQUENCE [MRNA]</scope>
    <scope>TISSUE SPECIFICITY</scope>
    <source>
        <tissue>Trichome gland</tissue>
    </source>
</reference>
<reference key="2">
    <citation type="journal article" date="2016" name="Proc. Natl. Acad. Sci. U.S.A.">
        <title>Carnosic acid biosynthesis elucidated by a synthetic biology platform.</title>
        <authorList>
            <person name="Ignea C."/>
            <person name="Athanasakoglou A."/>
            <person name="Ioannou E."/>
            <person name="Georgantea P."/>
            <person name="Trikka F.A."/>
            <person name="Loupassaki S."/>
            <person name="Roussis V."/>
            <person name="Makris A.M."/>
            <person name="Kampranis S.C."/>
        </authorList>
    </citation>
    <scope>FUNCTION</scope>
    <scope>CATALYTIC ACTIVITY</scope>
</reference>
<reference key="3">
    <citation type="journal article" date="2019" name="Nat. Prod. Rep.">
        <title>Non-volatile natural products in plant glandular trichomes: chemistry, biological activities and biosynthesis.</title>
        <authorList>
            <person name="Liu Y."/>
            <person name="Jing S.-X."/>
            <person name="Luo S.-H."/>
            <person name="Li S.-H."/>
        </authorList>
    </citation>
    <scope>PATHWAY</scope>
    <scope>REVIEW</scope>
</reference>
<organism>
    <name type="scientific">Salvia pomifera</name>
    <name type="common">Apple sage</name>
    <dbReference type="NCBI Taxonomy" id="396869"/>
    <lineage>
        <taxon>Eukaryota</taxon>
        <taxon>Viridiplantae</taxon>
        <taxon>Streptophyta</taxon>
        <taxon>Embryophyta</taxon>
        <taxon>Tracheophyta</taxon>
        <taxon>Spermatophyta</taxon>
        <taxon>Magnoliopsida</taxon>
        <taxon>eudicotyledons</taxon>
        <taxon>Gunneridae</taxon>
        <taxon>Pentapetalae</taxon>
        <taxon>asterids</taxon>
        <taxon>lamiids</taxon>
        <taxon>Lamiales</taxon>
        <taxon>Lamiaceae</taxon>
        <taxon>Nepetoideae</taxon>
        <taxon>Mentheae</taxon>
        <taxon>Salviinae</taxon>
        <taxon>Salvia</taxon>
        <taxon>Salvia incertae sedis</taxon>
    </lineage>
</organism>
<keyword id="KW-0349">Heme</keyword>
<keyword id="KW-0408">Iron</keyword>
<keyword id="KW-0472">Membrane</keyword>
<keyword id="KW-0479">Metal-binding</keyword>
<keyword id="KW-0503">Monooxygenase</keyword>
<keyword id="KW-0560">Oxidoreductase</keyword>
<keyword id="KW-0812">Transmembrane</keyword>
<keyword id="KW-1133">Transmembrane helix</keyword>
<accession>A0A0S1TQ04</accession>
<feature type="chain" id="PRO_0000452576" description="Salviol synthase">
    <location>
        <begin position="1"/>
        <end position="499"/>
    </location>
</feature>
<feature type="transmembrane region" description="Helical" evidence="2">
    <location>
        <begin position="4"/>
        <end position="24"/>
    </location>
</feature>
<feature type="binding site" description="axial binding residue" evidence="1">
    <location>
        <position position="436"/>
    </location>
    <ligand>
        <name>heme</name>
        <dbReference type="ChEBI" id="CHEBI:30413"/>
    </ligand>
    <ligandPart>
        <name>Fe</name>
        <dbReference type="ChEBI" id="CHEBI:18248"/>
    </ligandPart>
</feature>
<dbReference type="EC" id="1.14.14.62" evidence="3"/>
<dbReference type="EMBL" id="KT157042">
    <property type="protein sequence ID" value="ALM25794.1"/>
    <property type="molecule type" value="mRNA"/>
</dbReference>
<dbReference type="SMR" id="A0A0S1TQ04"/>
<dbReference type="KEGG" id="ag:ALM25794"/>
<dbReference type="BioCyc" id="MetaCyc:MONOMER-21174"/>
<dbReference type="BRENDA" id="1.14.14.62">
    <property type="organism ID" value="15442"/>
</dbReference>
<dbReference type="UniPathway" id="UPA00213"/>
<dbReference type="GO" id="GO:0016020">
    <property type="term" value="C:membrane"/>
    <property type="evidence" value="ECO:0007669"/>
    <property type="project" value="UniProtKB-SubCell"/>
</dbReference>
<dbReference type="GO" id="GO:0020037">
    <property type="term" value="F:heme binding"/>
    <property type="evidence" value="ECO:0007669"/>
    <property type="project" value="InterPro"/>
</dbReference>
<dbReference type="GO" id="GO:0005506">
    <property type="term" value="F:iron ion binding"/>
    <property type="evidence" value="ECO:0007669"/>
    <property type="project" value="InterPro"/>
</dbReference>
<dbReference type="GO" id="GO:0016712">
    <property type="term" value="F:oxidoreductase activity, acting on paired donors, with incorporation or reduction of molecular oxygen, reduced flavin or flavoprotein as one donor, and incorporation of one atom of oxygen"/>
    <property type="evidence" value="ECO:0000314"/>
    <property type="project" value="UniProtKB"/>
</dbReference>
<dbReference type="GO" id="GO:0016102">
    <property type="term" value="P:diterpenoid biosynthetic process"/>
    <property type="evidence" value="ECO:0000314"/>
    <property type="project" value="UniProtKB"/>
</dbReference>
<dbReference type="CDD" id="cd11072">
    <property type="entry name" value="CYP71-like"/>
    <property type="match status" value="1"/>
</dbReference>
<dbReference type="FunFam" id="1.10.630.10:FF:000043">
    <property type="entry name" value="Cytochrome P450 99A2"/>
    <property type="match status" value="1"/>
</dbReference>
<dbReference type="Gene3D" id="1.10.630.10">
    <property type="entry name" value="Cytochrome P450"/>
    <property type="match status" value="1"/>
</dbReference>
<dbReference type="InterPro" id="IPR001128">
    <property type="entry name" value="Cyt_P450"/>
</dbReference>
<dbReference type="InterPro" id="IPR017972">
    <property type="entry name" value="Cyt_P450_CS"/>
</dbReference>
<dbReference type="InterPro" id="IPR002401">
    <property type="entry name" value="Cyt_P450_E_grp-I"/>
</dbReference>
<dbReference type="InterPro" id="IPR036396">
    <property type="entry name" value="Cyt_P450_sf"/>
</dbReference>
<dbReference type="PANTHER" id="PTHR47955:SF8">
    <property type="entry name" value="CYTOCHROME P450 71D11-LIKE"/>
    <property type="match status" value="1"/>
</dbReference>
<dbReference type="PANTHER" id="PTHR47955">
    <property type="entry name" value="CYTOCHROME P450 FAMILY 71 PROTEIN"/>
    <property type="match status" value="1"/>
</dbReference>
<dbReference type="Pfam" id="PF00067">
    <property type="entry name" value="p450"/>
    <property type="match status" value="1"/>
</dbReference>
<dbReference type="PRINTS" id="PR00463">
    <property type="entry name" value="EP450I"/>
</dbReference>
<dbReference type="PRINTS" id="PR00385">
    <property type="entry name" value="P450"/>
</dbReference>
<dbReference type="SUPFAM" id="SSF48264">
    <property type="entry name" value="Cytochrome P450"/>
    <property type="match status" value="1"/>
</dbReference>
<dbReference type="PROSITE" id="PS00086">
    <property type="entry name" value="CYTOCHROME_P450"/>
    <property type="match status" value="1"/>
</dbReference>
<comment type="function">
    <text evidence="3">Monooxygenase involved in the biosynthesis of labdane-related diterpenes natural products (PubMed:26976595). Catalyzes the oxidation of ferruginol to produce salviol (PubMed:26976595). Salviol is an intermediate in the biosynthesis of carnosate, a potent antioxidant (PubMed:26976595).</text>
</comment>
<comment type="catalytic activity">
    <reaction evidence="3">
        <text>ferruginol + reduced [NADPH--hemoprotein reductase] + O2 = salviol + oxidized [NADPH--hemoprotein reductase] + H2O + H(+)</text>
        <dbReference type="Rhea" id="RHEA:55436"/>
        <dbReference type="Rhea" id="RHEA-COMP:11964"/>
        <dbReference type="Rhea" id="RHEA-COMP:11965"/>
        <dbReference type="ChEBI" id="CHEBI:15377"/>
        <dbReference type="ChEBI" id="CHEBI:15378"/>
        <dbReference type="ChEBI" id="CHEBI:15379"/>
        <dbReference type="ChEBI" id="CHEBI:57618"/>
        <dbReference type="ChEBI" id="CHEBI:58210"/>
        <dbReference type="ChEBI" id="CHEBI:78274"/>
        <dbReference type="ChEBI" id="CHEBI:138944"/>
        <dbReference type="EC" id="1.14.14.62"/>
    </reaction>
    <physiologicalReaction direction="left-to-right" evidence="3">
        <dbReference type="Rhea" id="RHEA:55437"/>
    </physiologicalReaction>
</comment>
<comment type="cofactor">
    <cofactor evidence="1">
        <name>heme</name>
        <dbReference type="ChEBI" id="CHEBI:30413"/>
    </cofactor>
</comment>
<comment type="pathway">
    <text evidence="6">Secondary metabolite biosynthesis; terpenoid biosynthesis.</text>
</comment>
<comment type="subcellular location">
    <subcellularLocation>
        <location evidence="2">Membrane</location>
        <topology evidence="2">Single-pass membrane protein</topology>
    </subcellularLocation>
</comment>
<comment type="tissue specificity">
    <text evidence="3">Expressed in leaf glandular trichomes.</text>
</comment>
<comment type="similarity">
    <text evidence="5">Belongs to the cytochrome P450 family.</text>
</comment>
<gene>
    <name evidence="4" type="primary">CYP71BE52</name>
</gene>
<proteinExistence type="evidence at protein level"/>
<sequence>MEIHIPSLVLCISFFIFFKIVSKLKTKTSNRKHLPLPPGPWKLPLIGNLHNLVGALPHHTLRRLSRKFGPMMSLQLGELSAVIISSADAAKEIMKTHDLNFASRPQVAAADIIGYGSTNITFSPYGGHWRQLRKICTLELLSAKRVQSFRPLRERVFVDLCRRFADHGSSAVNFSEEFMSATYTLISRAVLGEEAEQHEGLLPNVKEMPELTAGFDISEVFPSVGLFKVMSRLRKRIVAVHKDTDRILDDVIHQHRAAKSEEHKDLLDVLLQLQEDGLELPLTDENIKSVLVDMLVAGSETSSTVIEWAMAEMLKNPRILEKAQEEVRRVFDKEGTVDESHIHELKYLKSVVKETLRVHPPAPLILPRICGETCEINGYEIPAETKIIVNAWAVNRDPKYWEDSDCFKPERFLDNLVDFRGNHFQYIPFGAGRRMCPGIGFGLANVELPLAMFMYHFDWELDGGMKPQDLDMEEKFGASAKKLKDLFLIPAIKRTLPTK</sequence>
<evidence type="ECO:0000250" key="1">
    <source>
        <dbReference type="UniProtKB" id="Q94IP1"/>
    </source>
</evidence>
<evidence type="ECO:0000255" key="2"/>
<evidence type="ECO:0000269" key="3">
    <source>
    </source>
</evidence>
<evidence type="ECO:0000303" key="4">
    <source>
    </source>
</evidence>
<evidence type="ECO:0000305" key="5"/>
<evidence type="ECO:0000305" key="6">
    <source>
    </source>
</evidence>
<protein>
    <recommendedName>
        <fullName evidence="5">Salviol synthase</fullName>
        <ecNumber evidence="3">1.14.14.62</ecNumber>
    </recommendedName>
    <alternativeName>
        <fullName evidence="4">Cytochrome P450 71BE52</fullName>
        <shortName evidence="4">SpCYP71BE52</shortName>
    </alternativeName>
</protein>
<name>C71BE_SALPM</name>